<comment type="function">
    <text evidence="1">Acyl-CoA binding protein which acts as the peroxisome receptor for pexophagy but is dispensable for aggrephagy and nonselective autophagy. Binds medium- and long-chain acyl-CoA esters (By similarity).</text>
</comment>
<comment type="subcellular location">
    <subcellularLocation>
        <location evidence="5">Membrane</location>
        <topology evidence="5">Single-pass membrane protein</topology>
    </subcellularLocation>
</comment>
<comment type="similarity">
    <text evidence="5">Belongs to the ATG37 family.</text>
</comment>
<proteinExistence type="evidence at transcript level"/>
<dbReference type="EMBL" id="BC095655">
    <property type="protein sequence ID" value="AAH95655.1"/>
    <property type="molecule type" value="mRNA"/>
</dbReference>
<dbReference type="RefSeq" id="NP_001018483.1">
    <property type="nucleotide sequence ID" value="NM_001020647.1"/>
</dbReference>
<dbReference type="SMR" id="Q502L1"/>
<dbReference type="FunCoup" id="Q502L1">
    <property type="interactions" value="1004"/>
</dbReference>
<dbReference type="STRING" id="7955.ENSDARP00000117266"/>
<dbReference type="PaxDb" id="7955-ENSDARP00000117266"/>
<dbReference type="GeneID" id="553674"/>
<dbReference type="KEGG" id="dre:553674"/>
<dbReference type="AGR" id="ZFIN:ZDB-GENE-050522-268"/>
<dbReference type="CTD" id="553674"/>
<dbReference type="ZFIN" id="ZDB-GENE-050522-268">
    <property type="gene designation" value="acbd5a"/>
</dbReference>
<dbReference type="eggNOG" id="KOG0817">
    <property type="taxonomic scope" value="Eukaryota"/>
</dbReference>
<dbReference type="InParanoid" id="Q502L1"/>
<dbReference type="OrthoDB" id="71307at2759"/>
<dbReference type="PhylomeDB" id="Q502L1"/>
<dbReference type="Reactome" id="R-DRE-390918">
    <property type="pathway name" value="Peroxisomal lipid metabolism"/>
</dbReference>
<dbReference type="Reactome" id="R-DRE-8980692">
    <property type="pathway name" value="RHOA GTPase cycle"/>
</dbReference>
<dbReference type="Reactome" id="R-DRE-9603798">
    <property type="pathway name" value="Class I peroxisomal membrane protein import"/>
</dbReference>
<dbReference type="PRO" id="PR:Q502L1"/>
<dbReference type="Proteomes" id="UP000000437">
    <property type="component" value="Chromosome 24"/>
</dbReference>
<dbReference type="GO" id="GO:0005737">
    <property type="term" value="C:cytoplasm"/>
    <property type="evidence" value="ECO:0000318"/>
    <property type="project" value="GO_Central"/>
</dbReference>
<dbReference type="GO" id="GO:0016020">
    <property type="term" value="C:membrane"/>
    <property type="evidence" value="ECO:0007669"/>
    <property type="project" value="UniProtKB-SubCell"/>
</dbReference>
<dbReference type="GO" id="GO:0005777">
    <property type="term" value="C:peroxisome"/>
    <property type="evidence" value="ECO:0000318"/>
    <property type="project" value="GO_Central"/>
</dbReference>
<dbReference type="GO" id="GO:0000062">
    <property type="term" value="F:fatty-acyl-CoA binding"/>
    <property type="evidence" value="ECO:0000318"/>
    <property type="project" value="GO_Central"/>
</dbReference>
<dbReference type="GO" id="GO:0006631">
    <property type="term" value="P:fatty acid metabolic process"/>
    <property type="evidence" value="ECO:0000318"/>
    <property type="project" value="GO_Central"/>
</dbReference>
<dbReference type="GO" id="GO:0000425">
    <property type="term" value="P:pexophagy"/>
    <property type="evidence" value="ECO:0007669"/>
    <property type="project" value="InterPro"/>
</dbReference>
<dbReference type="CDD" id="cd00435">
    <property type="entry name" value="ACBP"/>
    <property type="match status" value="1"/>
</dbReference>
<dbReference type="FunFam" id="1.20.80.10:FF:000010">
    <property type="entry name" value="Acyl-CoA-binding domain-containing protein 5"/>
    <property type="match status" value="1"/>
</dbReference>
<dbReference type="Gene3D" id="1.20.80.10">
    <property type="match status" value="1"/>
</dbReference>
<dbReference type="InterPro" id="IPR016347">
    <property type="entry name" value="ACBD5"/>
</dbReference>
<dbReference type="InterPro" id="IPR022408">
    <property type="entry name" value="Acyl-CoA-binding_prot_CS"/>
</dbReference>
<dbReference type="InterPro" id="IPR000582">
    <property type="entry name" value="Acyl-CoA-binding_protein"/>
</dbReference>
<dbReference type="InterPro" id="IPR035984">
    <property type="entry name" value="Acyl-CoA-binding_sf"/>
</dbReference>
<dbReference type="InterPro" id="IPR014352">
    <property type="entry name" value="FERM/acyl-CoA-bd_prot_sf"/>
</dbReference>
<dbReference type="PANTHER" id="PTHR23310:SF6">
    <property type="entry name" value="ACYL-COA-BINDING DOMAIN-CONTAINING PROTEIN 5"/>
    <property type="match status" value="1"/>
</dbReference>
<dbReference type="PANTHER" id="PTHR23310">
    <property type="entry name" value="ACYL-COA-BINDING PROTEIN, ACBP"/>
    <property type="match status" value="1"/>
</dbReference>
<dbReference type="Pfam" id="PF00887">
    <property type="entry name" value="ACBP"/>
    <property type="match status" value="1"/>
</dbReference>
<dbReference type="PIRSF" id="PIRSF002412">
    <property type="entry name" value="MA_DBI"/>
    <property type="match status" value="1"/>
</dbReference>
<dbReference type="PRINTS" id="PR00689">
    <property type="entry name" value="ACOABINDINGP"/>
</dbReference>
<dbReference type="SUPFAM" id="SSF47027">
    <property type="entry name" value="Acyl-CoA binding protein"/>
    <property type="match status" value="1"/>
</dbReference>
<dbReference type="PROSITE" id="PS00880">
    <property type="entry name" value="ACB_1"/>
    <property type="match status" value="1"/>
</dbReference>
<dbReference type="PROSITE" id="PS51228">
    <property type="entry name" value="ACB_2"/>
    <property type="match status" value="1"/>
</dbReference>
<organism>
    <name type="scientific">Danio rerio</name>
    <name type="common">Zebrafish</name>
    <name type="synonym">Brachydanio rerio</name>
    <dbReference type="NCBI Taxonomy" id="7955"/>
    <lineage>
        <taxon>Eukaryota</taxon>
        <taxon>Metazoa</taxon>
        <taxon>Chordata</taxon>
        <taxon>Craniata</taxon>
        <taxon>Vertebrata</taxon>
        <taxon>Euteleostomi</taxon>
        <taxon>Actinopterygii</taxon>
        <taxon>Neopterygii</taxon>
        <taxon>Teleostei</taxon>
        <taxon>Ostariophysi</taxon>
        <taxon>Cypriniformes</taxon>
        <taxon>Danionidae</taxon>
        <taxon>Danioninae</taxon>
        <taxon>Danio</taxon>
    </lineage>
</organism>
<protein>
    <recommendedName>
        <fullName>Acyl-CoA-binding domain-containing protein 5A</fullName>
    </recommendedName>
</protein>
<keyword id="KW-0072">Autophagy</keyword>
<keyword id="KW-0175">Coiled coil</keyword>
<keyword id="KW-0446">Lipid-binding</keyword>
<keyword id="KW-0472">Membrane</keyword>
<keyword id="KW-1185">Reference proteome</keyword>
<keyword id="KW-0812">Transmembrane</keyword>
<keyword id="KW-1133">Transmembrane helix</keyword>
<keyword id="KW-0813">Transport</keyword>
<evidence type="ECO:0000250" key="1"/>
<evidence type="ECO:0000255" key="2"/>
<evidence type="ECO:0000255" key="3">
    <source>
        <dbReference type="PROSITE-ProRule" id="PRU00573"/>
    </source>
</evidence>
<evidence type="ECO:0000256" key="4">
    <source>
        <dbReference type="SAM" id="MobiDB-lite"/>
    </source>
</evidence>
<evidence type="ECO:0000305" key="5"/>
<feature type="chain" id="PRO_0000287382" description="Acyl-CoA-binding domain-containing protein 5A">
    <location>
        <begin position="1"/>
        <end position="501"/>
    </location>
</feature>
<feature type="transmembrane region" description="Helical" evidence="2">
    <location>
        <begin position="465"/>
        <end position="485"/>
    </location>
</feature>
<feature type="domain" description="ACB" evidence="3">
    <location>
        <begin position="9"/>
        <end position="98"/>
    </location>
</feature>
<feature type="region of interest" description="Disordered" evidence="4">
    <location>
        <begin position="173"/>
        <end position="405"/>
    </location>
</feature>
<feature type="coiled-coil region" evidence="2">
    <location>
        <begin position="406"/>
        <end position="437"/>
    </location>
</feature>
<feature type="compositionally biased region" description="Acidic residues" evidence="4">
    <location>
        <begin position="176"/>
        <end position="195"/>
    </location>
</feature>
<feature type="compositionally biased region" description="Polar residues" evidence="4">
    <location>
        <begin position="219"/>
        <end position="235"/>
    </location>
</feature>
<feature type="compositionally biased region" description="Basic and acidic residues" evidence="4">
    <location>
        <begin position="236"/>
        <end position="254"/>
    </location>
</feature>
<feature type="compositionally biased region" description="Basic and acidic residues" evidence="4">
    <location>
        <begin position="266"/>
        <end position="283"/>
    </location>
</feature>
<feature type="compositionally biased region" description="Basic and acidic residues" evidence="4">
    <location>
        <begin position="328"/>
        <end position="366"/>
    </location>
</feature>
<feature type="compositionally biased region" description="Low complexity" evidence="4">
    <location>
        <begin position="376"/>
        <end position="389"/>
    </location>
</feature>
<feature type="binding site" evidence="1">
    <location>
        <begin position="20"/>
        <end position="29"/>
    </location>
    <ligand>
        <name>an acyl-CoA</name>
        <dbReference type="ChEBI" id="CHEBI:58342"/>
    </ligand>
</feature>
<feature type="binding site" evidence="1">
    <location>
        <begin position="40"/>
        <end position="44"/>
    </location>
    <ligand>
        <name>an acyl-CoA</name>
        <dbReference type="ChEBI" id="CHEBI:58342"/>
    </ligand>
</feature>
<feature type="binding site" evidence="1">
    <location>
        <position position="66"/>
    </location>
    <ligand>
        <name>an acyl-CoA</name>
        <dbReference type="ChEBI" id="CHEBI:58342"/>
    </ligand>
</feature>
<feature type="binding site" evidence="1">
    <location>
        <position position="85"/>
    </location>
    <ligand>
        <name>an acyl-CoA</name>
        <dbReference type="ChEBI" id="CHEBI:58342"/>
    </ligand>
</feature>
<reference key="1">
    <citation type="submission" date="2005-05" db="EMBL/GenBank/DDBJ databases">
        <authorList>
            <consortium name="NIH - Zebrafish Gene Collection (ZGC) project"/>
        </authorList>
    </citation>
    <scope>NUCLEOTIDE SEQUENCE [LARGE SCALE MRNA]</scope>
    <source>
        <tissue>Olfactory epithelium</tissue>
    </source>
</reference>
<name>ACB5A_DANRE</name>
<gene>
    <name type="primary">acbd5a</name>
    <name type="synonym">acbd5</name>
    <name type="ORF">zgc:112043</name>
</gene>
<accession>Q502L1</accession>
<sequence length="501" mass="55489">MEGDSNPLYEQRFNAAVKVIQNLPPNGSFQPSHDMMLKFYSYYKQATQGPCNIPRPGFWDPVGKAKWDAWSSLGEMPKEEAMAAYVDDLKLILESMPVSSEVEELLQVIGPFYELVDEKRKITQVSDLSTGFGNLLSSPPKCVTKSIIRTMEMNGNLEGYPIKTAETLKVKSIDLEDREDDDDEDEEGERDEVEEFKEVEKASQPKKRVSAGRPKGPVSNGSISQHKGLSNGTHGSKSDLNRQESEENTEHMNHDGGIVELNGHLNSEKDKEEDVSSSHHVASDSDSEVYCDSVDQFGGEDGSEIHMNRSLEVLEESHSTPSSTGDIRSQDDELLGREEGVQHGGEDGRGSRGGAQRRELPVKRSDSSVVRRGRGSRSPASGSGSAGPQQGSGGDGERWGADGPMTENLNEQIICALARLQDDMQSVLQRLHTLEALTASQARSLALPSDYLTTPANRNKKKPSWWPFDVSLGTVAFAVVWPFVVQWLIRVYVQRRRRRIN</sequence>